<accession>P47636</accession>
<comment type="function">
    <text evidence="2">Catalyzes the interconversion of ribulose-5-P and ribose-5-P.</text>
</comment>
<comment type="catalytic activity">
    <reaction evidence="2">
        <text>aldehydo-D-ribose 5-phosphate = D-ribulose 5-phosphate</text>
        <dbReference type="Rhea" id="RHEA:14657"/>
        <dbReference type="ChEBI" id="CHEBI:58121"/>
        <dbReference type="ChEBI" id="CHEBI:58273"/>
        <dbReference type="EC" id="5.3.1.6"/>
    </reaction>
</comment>
<comment type="pathway">
    <text evidence="2">Carbohydrate degradation; pentose phosphate pathway; D-ribose 5-phosphate from D-ribulose 5-phosphate (non-oxidative stage): step 1/1.</text>
</comment>
<comment type="subunit">
    <text evidence="2">Homodimer.</text>
</comment>
<comment type="similarity">
    <text evidence="3">Belongs to the LacAB/RpiB family.</text>
</comment>
<sequence>MSFNIFIASDHTGLTLKKIISEHLKTKQFNVVDLGPNYFDANDDYPDFAFLVADKVKKNSDKDLGILICGTGVGVCMAANKVKGVLAALVVSEKTAALARQHDNANVLCLSSRFVTDSENIKIVDDFLKANFEGGRHQRRIDKIIRYEKETE</sequence>
<organism>
    <name type="scientific">Mycoplasma genitalium (strain ATCC 33530 / DSM 19775 / NCTC 10195 / G37)</name>
    <name type="common">Mycoplasmoides genitalium</name>
    <dbReference type="NCBI Taxonomy" id="243273"/>
    <lineage>
        <taxon>Bacteria</taxon>
        <taxon>Bacillati</taxon>
        <taxon>Mycoplasmatota</taxon>
        <taxon>Mycoplasmoidales</taxon>
        <taxon>Mycoplasmoidaceae</taxon>
        <taxon>Mycoplasmoides</taxon>
    </lineage>
</organism>
<proteinExistence type="evidence at protein level"/>
<name>RPIB_MYCGE</name>
<gene>
    <name evidence="2" type="primary">rpiB</name>
    <name type="ordered locus">MG396</name>
</gene>
<reference key="1">
    <citation type="journal article" date="1995" name="Science">
        <title>The minimal gene complement of Mycoplasma genitalium.</title>
        <authorList>
            <person name="Fraser C.M."/>
            <person name="Gocayne J.D."/>
            <person name="White O."/>
            <person name="Adams M.D."/>
            <person name="Clayton R.A."/>
            <person name="Fleischmann R.D."/>
            <person name="Bult C.J."/>
            <person name="Kerlavage A.R."/>
            <person name="Sutton G.G."/>
            <person name="Kelley J.M."/>
            <person name="Fritchman J.L."/>
            <person name="Weidman J.F."/>
            <person name="Small K.V."/>
            <person name="Sandusky M."/>
            <person name="Fuhrmann J.L."/>
            <person name="Nguyen D.T."/>
            <person name="Utterback T.R."/>
            <person name="Saudek D.M."/>
            <person name="Phillips C.A."/>
            <person name="Merrick J.M."/>
            <person name="Tomb J.-F."/>
            <person name="Dougherty B.A."/>
            <person name="Bott K.F."/>
            <person name="Hu P.-C."/>
            <person name="Lucier T.S."/>
            <person name="Peterson S.N."/>
            <person name="Smith H.O."/>
            <person name="Hutchison C.A. III"/>
            <person name="Venter J.C."/>
        </authorList>
    </citation>
    <scope>NUCLEOTIDE SEQUENCE [LARGE SCALE GENOMIC DNA]</scope>
    <source>
        <strain>ATCC 33530 / DSM 19775 / NCTC 10195 / G37</strain>
    </source>
</reference>
<evidence type="ECO:0000250" key="1">
    <source>
        <dbReference type="UniProtKB" id="P37351"/>
    </source>
</evidence>
<evidence type="ECO:0000250" key="2">
    <source>
        <dbReference type="UniProtKB" id="P9WKD7"/>
    </source>
</evidence>
<evidence type="ECO:0000305" key="3"/>
<evidence type="ECO:0007829" key="4">
    <source>
        <dbReference type="PDB" id="6MU0"/>
    </source>
</evidence>
<feature type="chain" id="PRO_0000208165" description="Probable ribose-5-phosphate isomerase B">
    <location>
        <begin position="1"/>
        <end position="152"/>
    </location>
</feature>
<feature type="active site" description="Proton acceptor" evidence="1">
    <location>
        <position position="69"/>
    </location>
</feature>
<feature type="active site" description="Proton donor" evidence="2">
    <location>
        <position position="102"/>
    </location>
</feature>
<feature type="binding site" evidence="2">
    <location>
        <begin position="10"/>
        <end position="11"/>
    </location>
    <ligand>
        <name>D-ribulose 5-phosphate</name>
        <dbReference type="ChEBI" id="CHEBI:58121"/>
    </ligand>
</feature>
<feature type="binding site" evidence="2">
    <location>
        <begin position="70"/>
        <end position="74"/>
    </location>
    <ligand>
        <name>D-ribulose 5-phosphate</name>
        <dbReference type="ChEBI" id="CHEBI:58121"/>
    </ligand>
</feature>
<feature type="binding site" evidence="2">
    <location>
        <position position="103"/>
    </location>
    <ligand>
        <name>D-ribulose 5-phosphate</name>
        <dbReference type="ChEBI" id="CHEBI:58121"/>
    </ligand>
</feature>
<feature type="binding site" evidence="2">
    <location>
        <position position="113"/>
    </location>
    <ligand>
        <name>D-ribulose 5-phosphate</name>
        <dbReference type="ChEBI" id="CHEBI:58121"/>
    </ligand>
</feature>
<feature type="binding site" evidence="2">
    <location>
        <position position="136"/>
    </location>
    <ligand>
        <name>D-ribulose 5-phosphate</name>
        <dbReference type="ChEBI" id="CHEBI:58121"/>
    </ligand>
</feature>
<feature type="binding site" evidence="2">
    <location>
        <position position="140"/>
    </location>
    <ligand>
        <name>D-ribulose 5-phosphate</name>
        <dbReference type="ChEBI" id="CHEBI:58121"/>
    </ligand>
</feature>
<feature type="strand" evidence="4">
    <location>
        <begin position="3"/>
        <end position="9"/>
    </location>
</feature>
<feature type="helix" evidence="4">
    <location>
        <begin position="11"/>
        <end position="13"/>
    </location>
</feature>
<feature type="helix" evidence="4">
    <location>
        <begin position="14"/>
        <end position="26"/>
    </location>
</feature>
<feature type="strand" evidence="4">
    <location>
        <begin position="30"/>
        <end position="33"/>
    </location>
</feature>
<feature type="helix" evidence="4">
    <location>
        <begin position="45"/>
        <end position="58"/>
    </location>
</feature>
<feature type="turn" evidence="4">
    <location>
        <begin position="59"/>
        <end position="62"/>
    </location>
</feature>
<feature type="strand" evidence="4">
    <location>
        <begin position="64"/>
        <end position="72"/>
    </location>
</feature>
<feature type="helix" evidence="4">
    <location>
        <begin position="73"/>
        <end position="80"/>
    </location>
</feature>
<feature type="strand" evidence="4">
    <location>
        <begin position="87"/>
        <end position="89"/>
    </location>
</feature>
<feature type="helix" evidence="4">
    <location>
        <begin position="93"/>
        <end position="101"/>
    </location>
</feature>
<feature type="strand" evidence="4">
    <location>
        <begin position="106"/>
        <end position="115"/>
    </location>
</feature>
<feature type="helix" evidence="4">
    <location>
        <begin position="117"/>
        <end position="129"/>
    </location>
</feature>
<feature type="helix" evidence="4">
    <location>
        <begin position="136"/>
        <end position="150"/>
    </location>
</feature>
<keyword id="KW-0002">3D-structure</keyword>
<keyword id="KW-0119">Carbohydrate metabolism</keyword>
<keyword id="KW-0413">Isomerase</keyword>
<keyword id="KW-1185">Reference proteome</keyword>
<dbReference type="EC" id="5.3.1.6" evidence="2"/>
<dbReference type="EMBL" id="L43967">
    <property type="protein sequence ID" value="AAC71624.1"/>
    <property type="molecule type" value="Genomic_DNA"/>
</dbReference>
<dbReference type="PIR" id="H64243">
    <property type="entry name" value="H64243"/>
</dbReference>
<dbReference type="RefSeq" id="WP_009885626.1">
    <property type="nucleotide sequence ID" value="NC_000908.2"/>
</dbReference>
<dbReference type="PDB" id="6MU0">
    <property type="method" value="X-ray"/>
    <property type="resolution" value="1.10 A"/>
    <property type="chains" value="A=1-152"/>
</dbReference>
<dbReference type="PDBsum" id="6MU0"/>
<dbReference type="SMR" id="P47636"/>
<dbReference type="FunCoup" id="P47636">
    <property type="interactions" value="46"/>
</dbReference>
<dbReference type="STRING" id="243273.MG_396"/>
<dbReference type="GeneID" id="88282582"/>
<dbReference type="KEGG" id="mge:MG_396"/>
<dbReference type="eggNOG" id="COG0698">
    <property type="taxonomic scope" value="Bacteria"/>
</dbReference>
<dbReference type="HOGENOM" id="CLU_091396_4_1_14"/>
<dbReference type="InParanoid" id="P47636"/>
<dbReference type="OrthoDB" id="1778624at2"/>
<dbReference type="BioCyc" id="MGEN243273:G1GJ2-493-MONOMER"/>
<dbReference type="UniPathway" id="UPA00115">
    <property type="reaction ID" value="UER00412"/>
</dbReference>
<dbReference type="Proteomes" id="UP000000807">
    <property type="component" value="Chromosome"/>
</dbReference>
<dbReference type="GO" id="GO:0004751">
    <property type="term" value="F:ribose-5-phosphate isomerase activity"/>
    <property type="evidence" value="ECO:0000250"/>
    <property type="project" value="UniProtKB"/>
</dbReference>
<dbReference type="GO" id="GO:0019316">
    <property type="term" value="P:D-allose catabolic process"/>
    <property type="evidence" value="ECO:0000318"/>
    <property type="project" value="GO_Central"/>
</dbReference>
<dbReference type="GO" id="GO:0009052">
    <property type="term" value="P:pentose-phosphate shunt, non-oxidative branch"/>
    <property type="evidence" value="ECO:0000250"/>
    <property type="project" value="UniProtKB"/>
</dbReference>
<dbReference type="Gene3D" id="3.40.1400.10">
    <property type="entry name" value="Sugar-phosphate isomerase, RpiB/LacA/LacB"/>
    <property type="match status" value="1"/>
</dbReference>
<dbReference type="InterPro" id="IPR004785">
    <property type="entry name" value="RpiB"/>
</dbReference>
<dbReference type="InterPro" id="IPR003500">
    <property type="entry name" value="RpiB_LacA_LacB"/>
</dbReference>
<dbReference type="InterPro" id="IPR036569">
    <property type="entry name" value="RpiB_LacA_LacB_sf"/>
</dbReference>
<dbReference type="NCBIfam" id="NF004051">
    <property type="entry name" value="PRK05571.1"/>
    <property type="match status" value="1"/>
</dbReference>
<dbReference type="NCBIfam" id="TIGR01120">
    <property type="entry name" value="rpiB"/>
    <property type="match status" value="1"/>
</dbReference>
<dbReference type="NCBIfam" id="TIGR00689">
    <property type="entry name" value="rpiB_lacA_lacB"/>
    <property type="match status" value="1"/>
</dbReference>
<dbReference type="PANTHER" id="PTHR30345:SF0">
    <property type="entry name" value="DNA DAMAGE-REPAIR_TOLERATION PROTEIN DRT102"/>
    <property type="match status" value="1"/>
</dbReference>
<dbReference type="PANTHER" id="PTHR30345">
    <property type="entry name" value="RIBOSE-5-PHOSPHATE ISOMERASE B"/>
    <property type="match status" value="1"/>
</dbReference>
<dbReference type="Pfam" id="PF02502">
    <property type="entry name" value="LacAB_rpiB"/>
    <property type="match status" value="1"/>
</dbReference>
<dbReference type="PIRSF" id="PIRSF005384">
    <property type="entry name" value="RpiB_LacA_B"/>
    <property type="match status" value="1"/>
</dbReference>
<dbReference type="SUPFAM" id="SSF89623">
    <property type="entry name" value="Ribose/Galactose isomerase RpiB/AlsB"/>
    <property type="match status" value="1"/>
</dbReference>
<protein>
    <recommendedName>
        <fullName evidence="2">Probable ribose-5-phosphate isomerase B</fullName>
        <ecNumber evidence="2">5.3.1.6</ecNumber>
    </recommendedName>
    <alternativeName>
        <fullName evidence="2">Phosphoriboisomerase B</fullName>
    </alternativeName>
</protein>